<sequence length="717" mass="77800">MASSSDSEDDSFMAVDQEETVLEGTMEQDEEPHPVLEAEETRHNRSMSELPEEVLEYILSFLSPYQEHKTAALVCKQWYRLIKGVAHQCYHGFVKAVQEGNIQWESRTYPYPGTPITQRFSHSACYYDANQSMYVFGGCTQSSCNAAFNDLWRLDLNSKEWIRPLASGSYPSPKAGATLVVYKDLLVLFGGWTRPSPYPLHQPERFFDEIHTYSPSKNWWNCIVTTHGPPPMAGHSSCVIDDKMIVFGGSLGSRQMSNDVWVLDLEQWAWSKPNISGPSPHPRGGQSQIVIDDATILILGGCGGPNALFKDAWLLHMHSGPWAWQPLKVENEEHGAPELWCHPACRVGQCVVVFSQAPSGRAPLSPSLNSRPSPISATPPALVPETREYRSQSPVRSMDEAPCVNGRWGTLRPRAQRQTPSGSREGSLSPARGDGSPILNGGSLSPGTAAVGGSSLDSPVQAISPSTPSAAEGYDLKIGLSLAPRRGSLPDQKDLRLGSVDLNWDLKPASSSNPMDGMDNRTVGGSMRHPPEQTNGVHTPPHVASALAGAVSPGALRRSLEAIKAMSSKGPSASAALSPPLGSSPGSPGSQSLSSGETVPIPRPGPAQGDGHSLPPIARRLGRHPPQSLNVGKPLYQSMNCKPMQMYVLDIKDTKEKGRVKWKVFNSSSVVGPPETSLHTVVQGRGELIIFGGLMDKKQNVKYYPKTNALYFVRAKR</sequence>
<dbReference type="EMBL" id="CR858005">
    <property type="protein sequence ID" value="CAH90248.1"/>
    <property type="molecule type" value="mRNA"/>
</dbReference>
<dbReference type="RefSeq" id="NP_001125106.1">
    <property type="nucleotide sequence ID" value="NM_001131634.1"/>
</dbReference>
<dbReference type="SMR" id="Q5RDA9"/>
<dbReference type="STRING" id="9601.ENSPPYP00000002116"/>
<dbReference type="GeneID" id="100171988"/>
<dbReference type="KEGG" id="pon:100171988"/>
<dbReference type="CTD" id="54455"/>
<dbReference type="eggNOG" id="KOG0379">
    <property type="taxonomic scope" value="Eukaryota"/>
</dbReference>
<dbReference type="InParanoid" id="Q5RDA9"/>
<dbReference type="OrthoDB" id="9973021at2759"/>
<dbReference type="Proteomes" id="UP000001595">
    <property type="component" value="Unplaced"/>
</dbReference>
<dbReference type="GO" id="GO:0019005">
    <property type="term" value="C:SCF ubiquitin ligase complex"/>
    <property type="evidence" value="ECO:0007669"/>
    <property type="project" value="TreeGrafter"/>
</dbReference>
<dbReference type="GO" id="GO:1990756">
    <property type="term" value="F:ubiquitin-like ligase-substrate adaptor activity"/>
    <property type="evidence" value="ECO:0007669"/>
    <property type="project" value="TreeGrafter"/>
</dbReference>
<dbReference type="CDD" id="cd22110">
    <property type="entry name" value="F-box_FBXO42"/>
    <property type="match status" value="1"/>
</dbReference>
<dbReference type="Gene3D" id="1.20.1280.50">
    <property type="match status" value="1"/>
</dbReference>
<dbReference type="Gene3D" id="2.120.10.80">
    <property type="entry name" value="Kelch-type beta propeller"/>
    <property type="match status" value="1"/>
</dbReference>
<dbReference type="InterPro" id="IPR036047">
    <property type="entry name" value="F-box-like_dom_sf"/>
</dbReference>
<dbReference type="InterPro" id="IPR001810">
    <property type="entry name" value="F-box_dom"/>
</dbReference>
<dbReference type="InterPro" id="IPR052821">
    <property type="entry name" value="F-box_only_SRC"/>
</dbReference>
<dbReference type="InterPro" id="IPR015915">
    <property type="entry name" value="Kelch-typ_b-propeller"/>
</dbReference>
<dbReference type="PANTHER" id="PTHR46432">
    <property type="entry name" value="F-BOX ONLY PROTEIN 42"/>
    <property type="match status" value="1"/>
</dbReference>
<dbReference type="PANTHER" id="PTHR46432:SF1">
    <property type="entry name" value="F-BOX ONLY PROTEIN 42"/>
    <property type="match status" value="1"/>
</dbReference>
<dbReference type="Pfam" id="PF12937">
    <property type="entry name" value="F-box-like"/>
    <property type="match status" value="1"/>
</dbReference>
<dbReference type="Pfam" id="PF13415">
    <property type="entry name" value="Kelch_3"/>
    <property type="match status" value="1"/>
</dbReference>
<dbReference type="Pfam" id="PF24681">
    <property type="entry name" value="Kelch_KLHDC2_KLHL20_DRC7"/>
    <property type="match status" value="1"/>
</dbReference>
<dbReference type="SMART" id="SM00256">
    <property type="entry name" value="FBOX"/>
    <property type="match status" value="1"/>
</dbReference>
<dbReference type="SUPFAM" id="SSF81383">
    <property type="entry name" value="F-box domain"/>
    <property type="match status" value="1"/>
</dbReference>
<dbReference type="SUPFAM" id="SSF117281">
    <property type="entry name" value="Kelch motif"/>
    <property type="match status" value="1"/>
</dbReference>
<dbReference type="PROSITE" id="PS50181">
    <property type="entry name" value="FBOX"/>
    <property type="match status" value="1"/>
</dbReference>
<gene>
    <name type="primary">FBXO42</name>
</gene>
<name>FBX42_PONAB</name>
<reference key="1">
    <citation type="submission" date="2004-11" db="EMBL/GenBank/DDBJ databases">
        <authorList>
            <consortium name="The German cDNA consortium"/>
        </authorList>
    </citation>
    <scope>NUCLEOTIDE SEQUENCE [LARGE SCALE MRNA]</scope>
    <source>
        <tissue>Kidney</tissue>
    </source>
</reference>
<feature type="chain" id="PRO_0000119944" description="F-box only protein 42">
    <location>
        <begin position="1"/>
        <end position="717"/>
    </location>
</feature>
<feature type="domain" description="F-box" evidence="3">
    <location>
        <begin position="44"/>
        <end position="93"/>
    </location>
</feature>
<feature type="repeat" description="Kelch 1">
    <location>
        <begin position="132"/>
        <end position="184"/>
    </location>
</feature>
<feature type="repeat" description="Kelch 2">
    <location>
        <begin position="186"/>
        <end position="242"/>
    </location>
</feature>
<feature type="repeat" description="Kelch 3">
    <location>
        <begin position="244"/>
        <end position="293"/>
    </location>
</feature>
<feature type="repeat" description="Kelch 4">
    <location>
        <begin position="295"/>
        <end position="342"/>
    </location>
</feature>
<feature type="region of interest" description="Disordered" evidence="4">
    <location>
        <begin position="1"/>
        <end position="47"/>
    </location>
</feature>
<feature type="region of interest" description="Disordered" evidence="4">
    <location>
        <begin position="361"/>
        <end position="472"/>
    </location>
</feature>
<feature type="region of interest" description="Disordered" evidence="4">
    <location>
        <begin position="508"/>
        <end position="539"/>
    </location>
</feature>
<feature type="region of interest" description="Disordered" evidence="4">
    <location>
        <begin position="570"/>
        <end position="635"/>
    </location>
</feature>
<feature type="compositionally biased region" description="Acidic residues" evidence="4">
    <location>
        <begin position="1"/>
        <end position="30"/>
    </location>
</feature>
<feature type="compositionally biased region" description="Basic and acidic residues" evidence="4">
    <location>
        <begin position="31"/>
        <end position="43"/>
    </location>
</feature>
<feature type="compositionally biased region" description="Low complexity" evidence="4">
    <location>
        <begin position="363"/>
        <end position="376"/>
    </location>
</feature>
<feature type="compositionally biased region" description="Polar residues" evidence="4">
    <location>
        <begin position="416"/>
        <end position="426"/>
    </location>
</feature>
<feature type="compositionally biased region" description="Polar residues" evidence="4">
    <location>
        <begin position="455"/>
        <end position="469"/>
    </location>
</feature>
<feature type="compositionally biased region" description="Low complexity" evidence="4">
    <location>
        <begin position="570"/>
        <end position="596"/>
    </location>
</feature>
<feature type="modified residue" description="Phosphoserine" evidence="2">
    <location>
        <position position="365"/>
    </location>
</feature>
<feature type="modified residue" description="Phosphoserine" evidence="2">
    <location>
        <position position="373"/>
    </location>
</feature>
<feature type="modified residue" description="Phosphothreonine" evidence="2">
    <location>
        <position position="378"/>
    </location>
</feature>
<feature type="modified residue" description="Phosphoserine" evidence="2">
    <location>
        <position position="552"/>
    </location>
</feature>
<protein>
    <recommendedName>
        <fullName>F-box only protein 42</fullName>
    </recommendedName>
</protein>
<accession>Q5RDA9</accession>
<comment type="function">
    <text evidence="1">Substrate-recognition component of some SCF (SKP1-CUL1-F-box protein)-type E3 ubiquitin ligase complex. Specifically recognizes p53/TP53, promoting its ubiquitination and degradation (By similarity).</text>
</comment>
<comment type="subunit">
    <text evidence="1">Component of some SCF complex, composed of CUL1, SKP1, RBX1 and FBXO42. Interacts (via the kelch domain) with p53/TP53; interaction is direct (By similarity).</text>
</comment>
<evidence type="ECO:0000250" key="1"/>
<evidence type="ECO:0000250" key="2">
    <source>
        <dbReference type="UniProtKB" id="Q6P3S6"/>
    </source>
</evidence>
<evidence type="ECO:0000255" key="3">
    <source>
        <dbReference type="PROSITE-ProRule" id="PRU00080"/>
    </source>
</evidence>
<evidence type="ECO:0000256" key="4">
    <source>
        <dbReference type="SAM" id="MobiDB-lite"/>
    </source>
</evidence>
<proteinExistence type="evidence at transcript level"/>
<organism>
    <name type="scientific">Pongo abelii</name>
    <name type="common">Sumatran orangutan</name>
    <name type="synonym">Pongo pygmaeus abelii</name>
    <dbReference type="NCBI Taxonomy" id="9601"/>
    <lineage>
        <taxon>Eukaryota</taxon>
        <taxon>Metazoa</taxon>
        <taxon>Chordata</taxon>
        <taxon>Craniata</taxon>
        <taxon>Vertebrata</taxon>
        <taxon>Euteleostomi</taxon>
        <taxon>Mammalia</taxon>
        <taxon>Eutheria</taxon>
        <taxon>Euarchontoglires</taxon>
        <taxon>Primates</taxon>
        <taxon>Haplorrhini</taxon>
        <taxon>Catarrhini</taxon>
        <taxon>Hominidae</taxon>
        <taxon>Pongo</taxon>
    </lineage>
</organism>
<keyword id="KW-0880">Kelch repeat</keyword>
<keyword id="KW-0597">Phosphoprotein</keyword>
<keyword id="KW-1185">Reference proteome</keyword>
<keyword id="KW-0677">Repeat</keyword>
<keyword id="KW-0833">Ubl conjugation pathway</keyword>